<name>SAR1B_HUMAN</name>
<dbReference type="EC" id="3.6.5.2" evidence="6 9"/>
<dbReference type="EMBL" id="AF092130">
    <property type="protein sequence ID" value="AAD40372.1"/>
    <property type="molecule type" value="mRNA"/>
</dbReference>
<dbReference type="EMBL" id="AF087850">
    <property type="protein sequence ID" value="AAP97161.1"/>
    <property type="molecule type" value="mRNA"/>
</dbReference>
<dbReference type="EMBL" id="CH471062">
    <property type="protein sequence ID" value="EAW62249.1"/>
    <property type="molecule type" value="Genomic_DNA"/>
</dbReference>
<dbReference type="EMBL" id="CH471062">
    <property type="protein sequence ID" value="EAW62250.1"/>
    <property type="molecule type" value="Genomic_DNA"/>
</dbReference>
<dbReference type="EMBL" id="BC002847">
    <property type="protein sequence ID" value="AAH02847.1"/>
    <property type="molecule type" value="mRNA"/>
</dbReference>
<dbReference type="EMBL" id="BC093034">
    <property type="protein sequence ID" value="AAH93034.1"/>
    <property type="molecule type" value="mRNA"/>
</dbReference>
<dbReference type="CCDS" id="CCDS4177.1"/>
<dbReference type="RefSeq" id="NP_001028675.1">
    <property type="nucleotide sequence ID" value="NM_001033503.3"/>
</dbReference>
<dbReference type="RefSeq" id="NP_057187.1">
    <property type="nucleotide sequence ID" value="NM_016103.4"/>
</dbReference>
<dbReference type="RefSeq" id="XP_016865010.1">
    <property type="nucleotide sequence ID" value="XM_017009521.1"/>
</dbReference>
<dbReference type="RefSeq" id="XP_047273213.1">
    <property type="nucleotide sequence ID" value="XM_047417257.1"/>
</dbReference>
<dbReference type="RefSeq" id="XP_054208688.1">
    <property type="nucleotide sequence ID" value="XM_054352713.1"/>
</dbReference>
<dbReference type="PDB" id="8E0A">
    <property type="method" value="X-ray"/>
    <property type="resolution" value="1.80 A"/>
    <property type="chains" value="A/B=1-198"/>
</dbReference>
<dbReference type="PDB" id="8E0B">
    <property type="method" value="X-ray"/>
    <property type="resolution" value="2.21 A"/>
    <property type="chains" value="A/B=1-198"/>
</dbReference>
<dbReference type="PDB" id="8E0C">
    <property type="method" value="X-ray"/>
    <property type="resolution" value="1.99 A"/>
    <property type="chains" value="A=1-198"/>
</dbReference>
<dbReference type="PDB" id="8E0D">
    <property type="method" value="X-ray"/>
    <property type="resolution" value="1.98 A"/>
    <property type="chains" value="A=1-198"/>
</dbReference>
<dbReference type="PDBsum" id="8E0A"/>
<dbReference type="PDBsum" id="8E0B"/>
<dbReference type="PDBsum" id="8E0C"/>
<dbReference type="PDBsum" id="8E0D"/>
<dbReference type="SMR" id="Q9Y6B6"/>
<dbReference type="BioGRID" id="119315">
    <property type="interactions" value="356"/>
</dbReference>
<dbReference type="ComplexPortal" id="CPX-2360">
    <property type="entry name" value="COPII vesicle coat complex"/>
</dbReference>
<dbReference type="CORUM" id="Q9Y6B6"/>
<dbReference type="FunCoup" id="Q9Y6B6">
    <property type="interactions" value="2400"/>
</dbReference>
<dbReference type="IntAct" id="Q9Y6B6">
    <property type="interactions" value="188"/>
</dbReference>
<dbReference type="STRING" id="9606.ENSP00000385432"/>
<dbReference type="DrugBank" id="DB04315">
    <property type="generic name" value="Guanosine-5'-Diphosphate"/>
</dbReference>
<dbReference type="iPTMnet" id="Q9Y6B6"/>
<dbReference type="PhosphoSitePlus" id="Q9Y6B6"/>
<dbReference type="SwissPalm" id="Q9Y6B6"/>
<dbReference type="BioMuta" id="SAR1B"/>
<dbReference type="DMDM" id="14285769"/>
<dbReference type="jPOST" id="Q9Y6B6"/>
<dbReference type="MassIVE" id="Q9Y6B6"/>
<dbReference type="PaxDb" id="9606-ENSP00000385432"/>
<dbReference type="PeptideAtlas" id="Q9Y6B6"/>
<dbReference type="ProteomicsDB" id="86646"/>
<dbReference type="Pumba" id="Q9Y6B6"/>
<dbReference type="Antibodypedia" id="26317">
    <property type="antibodies" value="266 antibodies from 32 providers"/>
</dbReference>
<dbReference type="DNASU" id="51128"/>
<dbReference type="Ensembl" id="ENST00000402673.7">
    <property type="protein sequence ID" value="ENSP00000385432.2"/>
    <property type="gene ID" value="ENSG00000152700.14"/>
</dbReference>
<dbReference type="Ensembl" id="ENST00000439578.5">
    <property type="protein sequence ID" value="ENSP00000404997.1"/>
    <property type="gene ID" value="ENSG00000152700.14"/>
</dbReference>
<dbReference type="GeneID" id="51128"/>
<dbReference type="KEGG" id="hsa:51128"/>
<dbReference type="MANE-Select" id="ENST00000402673.7">
    <property type="protein sequence ID" value="ENSP00000385432.2"/>
    <property type="RefSeq nucleotide sequence ID" value="NM_016103.4"/>
    <property type="RefSeq protein sequence ID" value="NP_057187.1"/>
</dbReference>
<dbReference type="UCSC" id="uc003kzq.4">
    <property type="organism name" value="human"/>
</dbReference>
<dbReference type="AGR" id="HGNC:10535"/>
<dbReference type="CTD" id="51128"/>
<dbReference type="DisGeNET" id="51128"/>
<dbReference type="GeneCards" id="SAR1B"/>
<dbReference type="GeneReviews" id="SAR1B"/>
<dbReference type="HGNC" id="HGNC:10535">
    <property type="gene designation" value="SAR1B"/>
</dbReference>
<dbReference type="HPA" id="ENSG00000152700">
    <property type="expression patterns" value="Low tissue specificity"/>
</dbReference>
<dbReference type="MalaCards" id="SAR1B"/>
<dbReference type="MIM" id="246700">
    <property type="type" value="phenotype"/>
</dbReference>
<dbReference type="MIM" id="607690">
    <property type="type" value="gene"/>
</dbReference>
<dbReference type="neXtProt" id="NX_Q9Y6B6"/>
<dbReference type="OpenTargets" id="ENSG00000152700"/>
<dbReference type="Orphanet" id="71">
    <property type="disease" value="Chylomicron retention disease"/>
</dbReference>
<dbReference type="PharmGKB" id="PA34943"/>
<dbReference type="VEuPathDB" id="HostDB:ENSG00000152700"/>
<dbReference type="eggNOG" id="KOG0077">
    <property type="taxonomic scope" value="Eukaryota"/>
</dbReference>
<dbReference type="GeneTree" id="ENSGT00940000160154"/>
<dbReference type="HOGENOM" id="CLU_040729_6_0_1"/>
<dbReference type="InParanoid" id="Q9Y6B6"/>
<dbReference type="OMA" id="DCADYER"/>
<dbReference type="OrthoDB" id="15478at2759"/>
<dbReference type="PAN-GO" id="Q9Y6B6">
    <property type="GO annotations" value="9 GO annotations based on evolutionary models"/>
</dbReference>
<dbReference type="PhylomeDB" id="Q9Y6B6"/>
<dbReference type="TreeFam" id="TF312890"/>
<dbReference type="PathwayCommons" id="Q9Y6B6"/>
<dbReference type="Reactome" id="R-HSA-1655829">
    <property type="pathway name" value="Regulation of cholesterol biosynthesis by SREBP (SREBF)"/>
</dbReference>
<dbReference type="Reactome" id="R-HSA-204005">
    <property type="pathway name" value="COPII-mediated vesicle transport"/>
</dbReference>
<dbReference type="Reactome" id="R-HSA-2132295">
    <property type="pathway name" value="MHC class II antigen presentation"/>
</dbReference>
<dbReference type="Reactome" id="R-HSA-5694530">
    <property type="pathway name" value="Cargo concentration in the ER"/>
</dbReference>
<dbReference type="Reactome" id="R-HSA-8963888">
    <property type="pathway name" value="Chylomicron assembly"/>
</dbReference>
<dbReference type="Reactome" id="R-HSA-9705671">
    <property type="pathway name" value="SARS-CoV-2 activates/modulates innate and adaptive immune responses"/>
</dbReference>
<dbReference type="Reactome" id="R-HSA-983170">
    <property type="pathway name" value="Antigen Presentation: Folding, assembly and peptide loading of class I MHC"/>
</dbReference>
<dbReference type="SignaLink" id="Q9Y6B6"/>
<dbReference type="BioGRID-ORCS" id="51128">
    <property type="hits" value="12 hits in 1154 CRISPR screens"/>
</dbReference>
<dbReference type="CD-CODE" id="91857CE7">
    <property type="entry name" value="Nucleolus"/>
</dbReference>
<dbReference type="ChiTaRS" id="SAR1B">
    <property type="organism name" value="human"/>
</dbReference>
<dbReference type="GeneWiki" id="SAR1B"/>
<dbReference type="GenomeRNAi" id="51128"/>
<dbReference type="Pharos" id="Q9Y6B6">
    <property type="development level" value="Tbio"/>
</dbReference>
<dbReference type="PRO" id="PR:Q9Y6B6"/>
<dbReference type="Proteomes" id="UP000005640">
    <property type="component" value="Chromosome 5"/>
</dbReference>
<dbReference type="RNAct" id="Q9Y6B6">
    <property type="molecule type" value="protein"/>
</dbReference>
<dbReference type="Bgee" id="ENSG00000152700">
    <property type="expression patterns" value="Expressed in jejunal mucosa and 202 other cell types or tissues"/>
</dbReference>
<dbReference type="ExpressionAtlas" id="Q9Y6B6">
    <property type="expression patterns" value="baseline and differential"/>
</dbReference>
<dbReference type="GO" id="GO:0030127">
    <property type="term" value="C:COPII vesicle coat"/>
    <property type="evidence" value="ECO:0000314"/>
    <property type="project" value="UniProtKB"/>
</dbReference>
<dbReference type="GO" id="GO:0005829">
    <property type="term" value="C:cytosol"/>
    <property type="evidence" value="ECO:0000314"/>
    <property type="project" value="UniProtKB"/>
</dbReference>
<dbReference type="GO" id="GO:0070971">
    <property type="term" value="C:endoplasmic reticulum exit site"/>
    <property type="evidence" value="ECO:0000314"/>
    <property type="project" value="UniProtKB"/>
</dbReference>
<dbReference type="GO" id="GO:0005789">
    <property type="term" value="C:endoplasmic reticulum membrane"/>
    <property type="evidence" value="ECO:0000304"/>
    <property type="project" value="Reactome"/>
</dbReference>
<dbReference type="GO" id="GO:0012507">
    <property type="term" value="C:ER to Golgi transport vesicle membrane"/>
    <property type="evidence" value="ECO:0000304"/>
    <property type="project" value="Reactome"/>
</dbReference>
<dbReference type="GO" id="GO:0032580">
    <property type="term" value="C:Golgi cisterna membrane"/>
    <property type="evidence" value="ECO:0007669"/>
    <property type="project" value="UniProtKB-SubCell"/>
</dbReference>
<dbReference type="GO" id="GO:0005765">
    <property type="term" value="C:lysosomal membrane"/>
    <property type="evidence" value="ECO:0000314"/>
    <property type="project" value="UniProtKB"/>
</dbReference>
<dbReference type="GO" id="GO:0140785">
    <property type="term" value="F:amino acid sensor activity"/>
    <property type="evidence" value="ECO:0000314"/>
    <property type="project" value="UniProtKB"/>
</dbReference>
<dbReference type="GO" id="GO:0003925">
    <property type="term" value="F:G protein activity"/>
    <property type="evidence" value="ECO:0000314"/>
    <property type="project" value="UniProtKB"/>
</dbReference>
<dbReference type="GO" id="GO:0005525">
    <property type="term" value="F:GTP binding"/>
    <property type="evidence" value="ECO:0007669"/>
    <property type="project" value="UniProtKB-KW"/>
</dbReference>
<dbReference type="GO" id="GO:0003924">
    <property type="term" value="F:GTPase activity"/>
    <property type="evidence" value="ECO:0000318"/>
    <property type="project" value="GO_Central"/>
</dbReference>
<dbReference type="GO" id="GO:0046872">
    <property type="term" value="F:metal ion binding"/>
    <property type="evidence" value="ECO:0007669"/>
    <property type="project" value="UniProtKB-KW"/>
</dbReference>
<dbReference type="GO" id="GO:0002474">
    <property type="term" value="P:antigen processing and presentation of peptide antigen via MHC class I"/>
    <property type="evidence" value="ECO:0000304"/>
    <property type="project" value="Reactome"/>
</dbReference>
<dbReference type="GO" id="GO:1990253">
    <property type="term" value="P:cellular response to leucine starvation"/>
    <property type="evidence" value="ECO:0000315"/>
    <property type="project" value="UniProtKB"/>
</dbReference>
<dbReference type="GO" id="GO:0048208">
    <property type="term" value="P:COPII vesicle coating"/>
    <property type="evidence" value="ECO:0000314"/>
    <property type="project" value="UniProtKB"/>
</dbReference>
<dbReference type="GO" id="GO:0090110">
    <property type="term" value="P:COPII-coated vesicle cargo loading"/>
    <property type="evidence" value="ECO:0000314"/>
    <property type="project" value="UniProtKB"/>
</dbReference>
<dbReference type="GO" id="GO:0006888">
    <property type="term" value="P:endoplasmic reticulum to Golgi vesicle-mediated transport"/>
    <property type="evidence" value="ECO:0000314"/>
    <property type="project" value="UniProtKB"/>
</dbReference>
<dbReference type="GO" id="GO:0006886">
    <property type="term" value="P:intracellular protein transport"/>
    <property type="evidence" value="ECO:0007669"/>
    <property type="project" value="InterPro"/>
</dbReference>
<dbReference type="GO" id="GO:0140353">
    <property type="term" value="P:lipid export from cell"/>
    <property type="evidence" value="ECO:0007669"/>
    <property type="project" value="Ensembl"/>
</dbReference>
<dbReference type="GO" id="GO:0055088">
    <property type="term" value="P:lipid homeostasis"/>
    <property type="evidence" value="ECO:0000314"/>
    <property type="project" value="UniProtKB"/>
</dbReference>
<dbReference type="GO" id="GO:0042953">
    <property type="term" value="P:lipoprotein transport"/>
    <property type="evidence" value="ECO:0000314"/>
    <property type="project" value="UniProtKB"/>
</dbReference>
<dbReference type="GO" id="GO:0061024">
    <property type="term" value="P:membrane organization"/>
    <property type="evidence" value="ECO:0000318"/>
    <property type="project" value="GO_Central"/>
</dbReference>
<dbReference type="GO" id="GO:1904262">
    <property type="term" value="P:negative regulation of TORC1 signaling"/>
    <property type="evidence" value="ECO:0000315"/>
    <property type="project" value="UniProtKB"/>
</dbReference>
<dbReference type="GO" id="GO:0003400">
    <property type="term" value="P:regulation of COPII vesicle coating"/>
    <property type="evidence" value="ECO:0000318"/>
    <property type="project" value="GO_Central"/>
</dbReference>
<dbReference type="GO" id="GO:0032368">
    <property type="term" value="P:regulation of lipid transport"/>
    <property type="evidence" value="ECO:0000314"/>
    <property type="project" value="UniProtKB"/>
</dbReference>
<dbReference type="GO" id="GO:1903432">
    <property type="term" value="P:regulation of TORC1 signaling"/>
    <property type="evidence" value="ECO:0000314"/>
    <property type="project" value="UniProt"/>
</dbReference>
<dbReference type="GO" id="GO:0016050">
    <property type="term" value="P:vesicle organization"/>
    <property type="evidence" value="ECO:0000318"/>
    <property type="project" value="GO_Central"/>
</dbReference>
<dbReference type="CDD" id="cd00879">
    <property type="entry name" value="Sar1"/>
    <property type="match status" value="1"/>
</dbReference>
<dbReference type="FunFam" id="3.40.50.300:FF:000161">
    <property type="entry name" value="Small COPII coat GTPase"/>
    <property type="match status" value="1"/>
</dbReference>
<dbReference type="Gene3D" id="3.40.50.300">
    <property type="entry name" value="P-loop containing nucleotide triphosphate hydrolases"/>
    <property type="match status" value="1"/>
</dbReference>
<dbReference type="InterPro" id="IPR027417">
    <property type="entry name" value="P-loop_NTPase"/>
</dbReference>
<dbReference type="InterPro" id="IPR005225">
    <property type="entry name" value="Small_GTP-bd"/>
</dbReference>
<dbReference type="InterPro" id="IPR006689">
    <property type="entry name" value="Small_GTPase_ARF/SAR"/>
</dbReference>
<dbReference type="InterPro" id="IPR006687">
    <property type="entry name" value="Small_GTPase_SAR1"/>
</dbReference>
<dbReference type="NCBIfam" id="TIGR00231">
    <property type="entry name" value="small_GTP"/>
    <property type="match status" value="1"/>
</dbReference>
<dbReference type="PANTHER" id="PTHR45684">
    <property type="entry name" value="RE74312P"/>
    <property type="match status" value="1"/>
</dbReference>
<dbReference type="Pfam" id="PF00025">
    <property type="entry name" value="Arf"/>
    <property type="match status" value="1"/>
</dbReference>
<dbReference type="PRINTS" id="PR00328">
    <property type="entry name" value="SAR1GTPBP"/>
</dbReference>
<dbReference type="SMART" id="SM00177">
    <property type="entry name" value="ARF"/>
    <property type="match status" value="1"/>
</dbReference>
<dbReference type="SMART" id="SM00178">
    <property type="entry name" value="SAR"/>
    <property type="match status" value="1"/>
</dbReference>
<dbReference type="SUPFAM" id="SSF52540">
    <property type="entry name" value="P-loop containing nucleoside triphosphate hydrolases"/>
    <property type="match status" value="1"/>
</dbReference>
<dbReference type="PROSITE" id="PS51422">
    <property type="entry name" value="SAR1"/>
    <property type="match status" value="1"/>
</dbReference>
<gene>
    <name evidence="11 16" type="primary">SAR1B</name>
    <name evidence="10" type="synonym">SARA2</name>
    <name type="synonym">SARB</name>
</gene>
<evidence type="ECO:0000250" key="1">
    <source>
        <dbReference type="UniProtKB" id="Q9QVY3"/>
    </source>
</evidence>
<evidence type="ECO:0000269" key="2">
    <source>
    </source>
</evidence>
<evidence type="ECO:0000269" key="3">
    <source>
    </source>
</evidence>
<evidence type="ECO:0000269" key="4">
    <source>
    </source>
</evidence>
<evidence type="ECO:0000269" key="5">
    <source>
    </source>
</evidence>
<evidence type="ECO:0000269" key="6">
    <source>
    </source>
</evidence>
<evidence type="ECO:0000269" key="7">
    <source>
    </source>
</evidence>
<evidence type="ECO:0000269" key="8">
    <source>
    </source>
</evidence>
<evidence type="ECO:0000269" key="9">
    <source>
    </source>
</evidence>
<evidence type="ECO:0000303" key="10">
    <source>
    </source>
</evidence>
<evidence type="ECO:0000303" key="11">
    <source>
    </source>
</evidence>
<evidence type="ECO:0000303" key="12">
    <source ref="2"/>
</evidence>
<evidence type="ECO:0000305" key="13"/>
<evidence type="ECO:0000305" key="14">
    <source>
    </source>
</evidence>
<evidence type="ECO:0000305" key="15">
    <source>
    </source>
</evidence>
<evidence type="ECO:0000312" key="16">
    <source>
        <dbReference type="HGNC" id="HGNC:10535"/>
    </source>
</evidence>
<evidence type="ECO:0007744" key="17">
    <source>
        <dbReference type="PDB" id="8E0A"/>
    </source>
</evidence>
<evidence type="ECO:0007744" key="18">
    <source>
        <dbReference type="PDB" id="8E0B"/>
    </source>
</evidence>
<evidence type="ECO:0007744" key="19">
    <source>
        <dbReference type="PDB" id="8E0C"/>
    </source>
</evidence>
<evidence type="ECO:0007744" key="20">
    <source>
        <dbReference type="PDB" id="8E0D"/>
    </source>
</evidence>
<evidence type="ECO:0007744" key="21">
    <source>
    </source>
</evidence>
<evidence type="ECO:0007829" key="22">
    <source>
        <dbReference type="PDB" id="8E0A"/>
    </source>
</evidence>
<evidence type="ECO:0007829" key="23">
    <source>
        <dbReference type="PDB" id="8E0C"/>
    </source>
</evidence>
<evidence type="ECO:0007829" key="24">
    <source>
        <dbReference type="PDB" id="8E0D"/>
    </source>
</evidence>
<organism>
    <name type="scientific">Homo sapiens</name>
    <name type="common">Human</name>
    <dbReference type="NCBI Taxonomy" id="9606"/>
    <lineage>
        <taxon>Eukaryota</taxon>
        <taxon>Metazoa</taxon>
        <taxon>Chordata</taxon>
        <taxon>Craniata</taxon>
        <taxon>Vertebrata</taxon>
        <taxon>Euteleostomi</taxon>
        <taxon>Mammalia</taxon>
        <taxon>Eutheria</taxon>
        <taxon>Euarchontoglires</taxon>
        <taxon>Primates</taxon>
        <taxon>Haplorrhini</taxon>
        <taxon>Catarrhini</taxon>
        <taxon>Hominidae</taxon>
        <taxon>Homo</taxon>
    </lineage>
</organism>
<proteinExistence type="evidence at protein level"/>
<reference key="1">
    <citation type="submission" date="1998-09" db="EMBL/GenBank/DDBJ databases">
        <authorList>
            <person name="Song H."/>
            <person name="Peng Y."/>
            <person name="Dai M."/>
            <person name="Huang Q."/>
            <person name="Mao Y."/>
            <person name="Zhang Q."/>
            <person name="Mao M."/>
            <person name="Fu G."/>
            <person name="Luo M."/>
            <person name="Chen J."/>
            <person name="Hu R."/>
        </authorList>
    </citation>
    <scope>NUCLEOTIDE SEQUENCE [MRNA]</scope>
    <source>
        <tissue>Pituitary tumor</tissue>
    </source>
</reference>
<reference key="2">
    <citation type="submission" date="2003-07" db="EMBL/GenBank/DDBJ databases">
        <title>Cloning of a novel human cDNA homologous to murine GTP-binding protein homologue mRNA.</title>
        <authorList>
            <person name="Zhou Y."/>
            <person name="Yu L."/>
            <person name="Gao J."/>
            <person name="Zhang P.Z."/>
            <person name="Wang X.K."/>
            <person name="Zhao S.Y."/>
        </authorList>
    </citation>
    <scope>NUCLEOTIDE SEQUENCE [MRNA]</scope>
</reference>
<reference key="3">
    <citation type="submission" date="2005-09" db="EMBL/GenBank/DDBJ databases">
        <authorList>
            <person name="Mural R.J."/>
            <person name="Istrail S."/>
            <person name="Sutton G.G."/>
            <person name="Florea L."/>
            <person name="Halpern A.L."/>
            <person name="Mobarry C.M."/>
            <person name="Lippert R."/>
            <person name="Walenz B."/>
            <person name="Shatkay H."/>
            <person name="Dew I."/>
            <person name="Miller J.R."/>
            <person name="Flanigan M.J."/>
            <person name="Edwards N.J."/>
            <person name="Bolanos R."/>
            <person name="Fasulo D."/>
            <person name="Halldorsson B.V."/>
            <person name="Hannenhalli S."/>
            <person name="Turner R."/>
            <person name="Yooseph S."/>
            <person name="Lu F."/>
            <person name="Nusskern D.R."/>
            <person name="Shue B.C."/>
            <person name="Zheng X.H."/>
            <person name="Zhong F."/>
            <person name="Delcher A.L."/>
            <person name="Huson D.H."/>
            <person name="Kravitz S.A."/>
            <person name="Mouchard L."/>
            <person name="Reinert K."/>
            <person name="Remington K.A."/>
            <person name="Clark A.G."/>
            <person name="Waterman M.S."/>
            <person name="Eichler E.E."/>
            <person name="Adams M.D."/>
            <person name="Hunkapiller M.W."/>
            <person name="Myers E.W."/>
            <person name="Venter J.C."/>
        </authorList>
    </citation>
    <scope>NUCLEOTIDE SEQUENCE [LARGE SCALE GENOMIC DNA]</scope>
</reference>
<reference key="4">
    <citation type="journal article" date="2004" name="Genome Res.">
        <title>The status, quality, and expansion of the NIH full-length cDNA project: the Mammalian Gene Collection (MGC).</title>
        <authorList>
            <consortium name="The MGC Project Team"/>
        </authorList>
    </citation>
    <scope>NUCLEOTIDE SEQUENCE [LARGE SCALE MRNA]</scope>
    <source>
        <tissue>Placenta</tissue>
    </source>
</reference>
<reference key="5">
    <citation type="journal article" date="2011" name="BMC Syst. Biol.">
        <title>Initial characterization of the human central proteome.</title>
        <authorList>
            <person name="Burkard T.R."/>
            <person name="Planyavsky M."/>
            <person name="Kaupe I."/>
            <person name="Breitwieser F.P."/>
            <person name="Buerckstuemmer T."/>
            <person name="Bennett K.L."/>
            <person name="Superti-Furga G."/>
            <person name="Colinge J."/>
        </authorList>
    </citation>
    <scope>IDENTIFICATION BY MASS SPECTROMETRY [LARGE SCALE ANALYSIS]</scope>
</reference>
<reference key="6">
    <citation type="journal article" date="2013" name="Traffic">
        <title>Silencing of mammalian Sar1 isoforms reveals COPII-independent protein sorting and transport.</title>
        <authorList>
            <person name="Cutrona M.B."/>
            <person name="Beznoussenko G.V."/>
            <person name="Fusella A."/>
            <person name="Martella O."/>
            <person name="Moral P."/>
            <person name="Mironov A.A."/>
        </authorList>
    </citation>
    <scope>FUNCTION</scope>
    <scope>SUBCELLULAR LOCATION</scope>
</reference>
<reference key="7">
    <citation type="journal article" date="2014" name="J. Proteomics">
        <title>An enzyme assisted RP-RPLC approach for in-depth analysis of human liver phosphoproteome.</title>
        <authorList>
            <person name="Bian Y."/>
            <person name="Song C."/>
            <person name="Cheng K."/>
            <person name="Dong M."/>
            <person name="Wang F."/>
            <person name="Huang J."/>
            <person name="Sun D."/>
            <person name="Wang L."/>
            <person name="Ye M."/>
            <person name="Zou H."/>
        </authorList>
    </citation>
    <scope>PHOSPHORYLATION [LARGE SCALE ANALYSIS] AT SER-164</scope>
    <scope>IDENTIFICATION BY MASS SPECTROMETRY [LARGE SCALE ANALYSIS]</scope>
    <source>
        <tissue>Liver</tissue>
    </source>
</reference>
<reference key="8">
    <citation type="journal article" date="2020" name="J. Biol. Chem.">
        <title>Small sequence variations between two mammalian paralogs of the small GTPase SAR1 underlie functional differences in coat protein complex II assembly.</title>
        <authorList>
            <person name="Melville D.B."/>
            <person name="Studer S."/>
            <person name="Schekman R."/>
        </authorList>
    </citation>
    <scope>FUNCTION</scope>
    <scope>CATALYTIC ACTIVITY</scope>
    <scope>ACTIVITY REGULATION</scope>
    <scope>SUBUNIT</scope>
</reference>
<reference key="9">
    <citation type="journal article" date="2021" name="Cell Metab.">
        <title>Receptor-mediated ER export of lipoproteins controls lipid homeostasis in mice and humans.</title>
        <authorList>
            <person name="Wang X."/>
            <person name="Wang H."/>
            <person name="Xu B."/>
            <person name="Huang D."/>
            <person name="Nie C."/>
            <person name="Pu L."/>
            <person name="Zajac G.J.M."/>
            <person name="Yan H."/>
            <person name="Zhao J."/>
            <person name="Shi F."/>
            <person name="Emmer B.T."/>
            <person name="Lu J."/>
            <person name="Wang R."/>
            <person name="Dong X."/>
            <person name="Dai J."/>
            <person name="Zhou W."/>
            <person name="Wang C."/>
            <person name="Gao G."/>
            <person name="Wang Y."/>
            <person name="Willer C."/>
            <person name="Lu X."/>
            <person name="Zhu Y."/>
            <person name="Chen X.W."/>
        </authorList>
    </citation>
    <scope>FUNCTION</scope>
    <scope>SUBCELLULAR LOCATION</scope>
    <scope>INTERACTION WITH SURF4</scope>
</reference>
<reference key="10">
    <citation type="journal article" date="2021" name="Nature">
        <title>SAR1B senses leucine levels to regulate mTORC1 signalling.</title>
        <authorList>
            <person name="Chen J."/>
            <person name="Ou Y."/>
            <person name="Luo R."/>
            <person name="Wang J."/>
            <person name="Wang D."/>
            <person name="Guan J."/>
            <person name="Li Y."/>
            <person name="Xia P."/>
            <person name="Chen P.R."/>
            <person name="Liu Y."/>
        </authorList>
    </citation>
    <scope>FUNCTION</scope>
    <scope>INTERACTION WITH MIOS</scope>
    <scope>SUBCELLULAR LOCATION</scope>
    <scope>MUTAGENESIS OF HIS-58; VAL-100; GLU-114; GLU-122; ALA-141 AND GLU-144</scope>
</reference>
<reference evidence="17 18 19 20" key="11">
    <citation type="journal article" date="2023" name="Proteins">
        <title>The alarmone ppGpp selectively inhibits the isoform A of the human small GTPase Sar1.</title>
        <authorList>
            <person name="Huang Q."/>
            <person name="Szebenyi D.M.E."/>
        </authorList>
    </citation>
    <scope>X-RAY CRYSTALLOGRAPHY (1.80 ANGSTROMS) IN COMPLEX WITH GTP; GDP; INHIBITOR AND MG(2+)</scope>
    <scope>FUNCTION</scope>
    <scope>CATALYTIC ACTIVITY</scope>
    <scope>BIOPHYSICOCHEMICAL PROPERTIES</scope>
    <scope>MUTAGENESIS OF HIS-79</scope>
</reference>
<reference key="12">
    <citation type="journal article" date="2003" name="Nat. Genet.">
        <title>Mutations in a Sar1 GTPase of COPII vesicles are associated with lipid absorption disorders.</title>
        <authorList>
            <person name="Jones B."/>
            <person name="Jones E.L."/>
            <person name="Bonney S.A."/>
            <person name="Patel H.N."/>
            <person name="Mensenkamp A.R."/>
            <person name="Eichenbaum-Voline S."/>
            <person name="Rudling M."/>
            <person name="Myrdal U."/>
            <person name="Annesi G."/>
            <person name="Naik S."/>
            <person name="Meadows N."/>
            <person name="Quattrone A."/>
            <person name="Islam S.A."/>
            <person name="Naoumova R.P."/>
            <person name="Angelin B."/>
            <person name="Infante R."/>
            <person name="Levy E."/>
            <person name="Roy C.C."/>
            <person name="Freemont P.S."/>
            <person name="Scott J."/>
            <person name="Shoulders C.C."/>
        </authorList>
    </citation>
    <scope>VARIANTS CMRD ARG-37; ASN-137 AND ARG-179</scope>
    <scope>TISSUE SPECIFICITY</scope>
</reference>
<reference key="13">
    <citation type="journal article" date="2007" name="Clin. Genet.">
        <title>SIL1 and SARA2 mutations in Marinesco-Sjogren and chylomicron retention diseases.</title>
        <authorList>
            <person name="Annesi G."/>
            <person name="Aguglia U."/>
            <person name="Tarantino P."/>
            <person name="Annesi F."/>
            <person name="De Marco E.V."/>
            <person name="Civitelli D."/>
            <person name="Torroni A."/>
            <person name="Quattrone A."/>
        </authorList>
    </citation>
    <scope>INVOLVEMENT IN CMRD BUT NOT IN MSS</scope>
</reference>
<reference key="14">
    <citation type="journal article" date="2009" name="J. Pediatr. Gastroenterol. Nutr.">
        <title>Novel missense mutations of SAR1B gene in an infant with chylomicron retention disease.</title>
        <authorList>
            <person name="Treepongkaruna S."/>
            <person name="Chongviriyaphan N."/>
            <person name="Suthutvoravut U."/>
            <person name="Charoenpipop D."/>
            <person name="Choubtum L."/>
            <person name="Wattanasirichaigoon D."/>
        </authorList>
    </citation>
    <scope>VARIANTS CMRD ASP-11 AND GLY-75</scope>
</reference>
<accession>Q9Y6B6</accession>
<accession>D3DQA4</accession>
<accession>Q567T4</accession>
<protein>
    <recommendedName>
        <fullName evidence="14">Small COPII coat GTPase SAR1B</fullName>
        <ecNumber evidence="6 9">3.6.5.2</ecNumber>
    </recommendedName>
    <alternativeName>
        <fullName evidence="12">GTP-binding protein B</fullName>
        <shortName evidence="12">GTBPB</shortName>
    </alternativeName>
    <alternativeName>
        <fullName evidence="16">Secretion-associated Ras-related GTPase 1B</fullName>
    </alternativeName>
</protein>
<comment type="function">
    <text evidence="5 6 7 8 9">Small GTPase that cycles between an active GTP-bound and an inactive GDP-bound state and mainly functions in vesicle-mediated endoplasmic reticulum (ER) to Golgi transport. The active GTP-bound form inserts into the endoplasmic reticulum membrane where it recruits the remainder of the coat protein complex II/COPII (PubMed:23433038, PubMed:32358066, PubMed:33186557, PubMed:36369712). The coat protein complex II assembling and polymerizing on endoplasmic reticulum membrane is responsible for both the sorting of cargos and the deformation and budding of membranes into vesicles destined to the Golgi (PubMed:23433038, PubMed:32358066, PubMed:33186557). In contrast to SAR1A, SAR1B specifically interacts with the cargo receptor SURF4 to mediate the transport of lipid-carrying lipoproteins including APOB and APOA1 from the endoplasmic reticulum to the Golgi and thereby, indirectly regulates lipid homeostasis (PubMed:32358066, PubMed:33186557). In addition to its role in vesicle trafficking, can also function as a leucine sensor regulating TORC1 signaling and more indirectly cellular metabolism, growth and survival. In absence of leucine, interacts with the GATOR2 complex via MIOS and inhibits TORC1 signaling. The binding of leucine abrogates the interaction with GATOR2 and the inhibition of the TORC1 signaling. This function is completely independent of the GTPase activity of SAR1B (PubMed:34290409).</text>
</comment>
<comment type="catalytic activity">
    <reaction evidence="6 9">
        <text>GTP + H2O = GDP + phosphate + H(+)</text>
        <dbReference type="Rhea" id="RHEA:19669"/>
        <dbReference type="ChEBI" id="CHEBI:15377"/>
        <dbReference type="ChEBI" id="CHEBI:15378"/>
        <dbReference type="ChEBI" id="CHEBI:37565"/>
        <dbReference type="ChEBI" id="CHEBI:43474"/>
        <dbReference type="ChEBI" id="CHEBI:58189"/>
        <dbReference type="EC" id="3.6.5.2"/>
    </reaction>
    <physiologicalReaction direction="left-to-right" evidence="15">
        <dbReference type="Rhea" id="RHEA:19670"/>
    </physiologicalReaction>
</comment>
<comment type="activity regulation">
    <text evidence="1 6">Small GTPases activation is mediated by guanine exchange factors (GEF), while inactivation through hydrolysis of the bound GTP is stimulated by GTPase activating proteins (GAP) (By similarity). Activated by the guanine nucleotide exchange factor PREB/SEC12 that facilitates the loading of SAR1B with GTP (PubMed:32358066). GTP hydrolysis is stimulated by SEC23/24 (By similarity).</text>
</comment>
<comment type="biophysicochemical properties">
    <kinetics>
        <Vmax evidence="9">40.8 nmol/h/mg enzyme toward GTP (at 37 degrees Celsius)</Vmax>
    </kinetics>
</comment>
<comment type="subunit">
    <text evidence="1 6 7 8">Homodimer; upon association with membrane (PubMed:32358066). Part of the coat protein complex II/COPII, composed of SEC23/24 and SEC13/31 heterodimers, that it helps recruit and assemble on endoplasmic reticulum (ER) membranes at ER exit site (PubMed:32358066). Interacts with PREB; PREB acts as a guanine nucleotide exchange factor facilitating the activation of SAR1B by loading it with GTP (PubMed:32358066). Interacts with SURF4; recruits the cargo receptor SURF4 and its lipoprotein cargos to COPII-coated ER to Golgi transport vesicles (PubMed:33186557). Interacts with MIOS; the interaction is direct, disrupted by the binding of leucine and mediates the interaction of SAR1B with the GATOR2 complex to negatively regulate the TORC1 signaling upon leucine deprivation (PubMed:34290409).</text>
</comment>
<comment type="interaction">
    <interactant intactId="EBI-4290665">
        <id>Q9Y6B6</id>
    </interactant>
    <interactant intactId="EBI-7062247">
        <id>Q9UHD4</id>
        <label>CIDEB</label>
    </interactant>
    <organismsDiffer>false</organismsDiffer>
    <experiments>3</experiments>
</comment>
<comment type="interaction">
    <interactant intactId="EBI-4290665">
        <id>Q9Y6B6</id>
    </interactant>
    <interactant intactId="EBI-3920694">
        <id>Q9NR31</id>
        <label>SAR1A</label>
    </interactant>
    <organismsDiffer>false</organismsDiffer>
    <experiments>3</experiments>
</comment>
<comment type="interaction">
    <interactant intactId="EBI-4290665">
        <id>Q9Y6B6</id>
    </interactant>
    <interactant intactId="EBI-8638294">
        <id>Q9NUH8</id>
        <label>TMEM14B</label>
    </interactant>
    <organismsDiffer>false</organismsDiffer>
    <experiments>3</experiments>
</comment>
<comment type="subcellular location">
    <subcellularLocation>
        <location evidence="7">Endoplasmic reticulum membrane</location>
        <topology evidence="1">Peripheral membrane protein</topology>
    </subcellularLocation>
    <subcellularLocation>
        <location evidence="1">Golgi apparatus</location>
        <location evidence="1">Golgi stack membrane</location>
        <topology evidence="1">Peripheral membrane protein</topology>
    </subcellularLocation>
    <subcellularLocation>
        <location evidence="8">Cytoplasm</location>
        <location evidence="8">Cytosol</location>
    </subcellularLocation>
    <subcellularLocation>
        <location evidence="8">Lysosome membrane</location>
    </subcellularLocation>
    <text evidence="5 8">Active at endoplasmic reticulum exit sites (ERES) where it inserts into the membrane and recruits the remainder of the coat protein complex II/COPII (PubMed:23433038). Upon leucine deprivation, associates with lysosomal membranes to repress TORC1 signaling (PubMed:34290409).</text>
</comment>
<comment type="tissue specificity">
    <text evidence="2">Expressed in many tissues including small intestine, liver, muscle and brain.</text>
</comment>
<comment type="disease" evidence="2 3 4">
    <disease id="DI-00308">
        <name>Chylomicron retention disease</name>
        <acronym>CMRD</acronym>
        <description>An autosomal recessive disorder of severe fat malabsorption associated with failure to thrive in infancy. The condition is characterized by deficiency of fat-soluble vitamins, low blood cholesterol levels, and a selective absence of chylomicrons from blood. Affected individuals accumulate chylomicron-like particles in membrane-bound compartments of enterocytes, which contain large cytosolic lipid droplets.</description>
        <dbReference type="MIM" id="246700"/>
    </disease>
    <text>The disease is caused by variants affecting the gene represented in this entry.</text>
</comment>
<comment type="similarity">
    <text evidence="13">Belongs to the small GTPase superfamily. SAR1 family.</text>
</comment>
<sequence length="198" mass="22410">MSFIFDWIYSGFSSVLQFLGLYKKTGKLVFLGLDNAGKTTLLHMLKDDRLGQHVPTLHPTSEELTIAGMTFTTFDLGGHVQARRVWKNYLPAINGIVFLVDCADHERLLESKEELDSLMTDETIANVPILILGNKIDRPEAISEERLREMFGLYGQTTGKGSISLKELNARPLEVFMCSVLKRQGYGEGFRWMAQYID</sequence>
<keyword id="KW-0002">3D-structure</keyword>
<keyword id="KW-0963">Cytoplasm</keyword>
<keyword id="KW-0225">Disease variant</keyword>
<keyword id="KW-0256">Endoplasmic reticulum</keyword>
<keyword id="KW-0931">ER-Golgi transport</keyword>
<keyword id="KW-0333">Golgi apparatus</keyword>
<keyword id="KW-0342">GTP-binding</keyword>
<keyword id="KW-0378">Hydrolase</keyword>
<keyword id="KW-0458">Lysosome</keyword>
<keyword id="KW-0460">Magnesium</keyword>
<keyword id="KW-0472">Membrane</keyword>
<keyword id="KW-0479">Metal-binding</keyword>
<keyword id="KW-0547">Nucleotide-binding</keyword>
<keyword id="KW-0597">Phosphoprotein</keyword>
<keyword id="KW-0653">Protein transport</keyword>
<keyword id="KW-1267">Proteomics identification</keyword>
<keyword id="KW-1185">Reference proteome</keyword>
<keyword id="KW-0813">Transport</keyword>
<feature type="chain" id="PRO_0000206261" description="Small COPII coat GTPase SAR1B">
    <location>
        <begin position="1"/>
        <end position="198"/>
    </location>
</feature>
<feature type="region of interest" description="Mediates recruitment to ER membranes" evidence="1">
    <location>
        <begin position="15"/>
        <end position="19"/>
    </location>
</feature>
<feature type="short sequence motif" description="STAR; SAR1-N-terminal activation recruitment. Required for the activation by PREB and subsequent recruitment to ER membrane" evidence="1">
    <location>
        <begin position="3"/>
        <end position="5"/>
    </location>
</feature>
<feature type="binding site" evidence="9 19">
    <location>
        <position position="34"/>
    </location>
    <ligand>
        <name>Mg(2+)</name>
        <dbReference type="ChEBI" id="CHEBI:18420"/>
    </ligand>
</feature>
<feature type="binding site" evidence="9 17 18">
    <location>
        <position position="35"/>
    </location>
    <ligand>
        <name>GDP</name>
        <dbReference type="ChEBI" id="CHEBI:58189"/>
    </ligand>
</feature>
<feature type="binding site" evidence="9 19">
    <location>
        <position position="35"/>
    </location>
    <ligand>
        <name>GTP</name>
        <dbReference type="ChEBI" id="CHEBI:37565"/>
    </ligand>
</feature>
<feature type="binding site" evidence="9 17">
    <location>
        <position position="36"/>
    </location>
    <ligand>
        <name>GDP</name>
        <dbReference type="ChEBI" id="CHEBI:58189"/>
    </ligand>
</feature>
<feature type="binding site" evidence="9 17 18">
    <location>
        <position position="37"/>
    </location>
    <ligand>
        <name>GDP</name>
        <dbReference type="ChEBI" id="CHEBI:58189"/>
    </ligand>
</feature>
<feature type="binding site" evidence="9 19">
    <location>
        <position position="37"/>
    </location>
    <ligand>
        <name>GTP</name>
        <dbReference type="ChEBI" id="CHEBI:37565"/>
    </ligand>
</feature>
<feature type="binding site" evidence="9 17 18">
    <location>
        <position position="38"/>
    </location>
    <ligand>
        <name>GDP</name>
        <dbReference type="ChEBI" id="CHEBI:58189"/>
    </ligand>
</feature>
<feature type="binding site" evidence="9 19">
    <location>
        <position position="38"/>
    </location>
    <ligand>
        <name>GTP</name>
        <dbReference type="ChEBI" id="CHEBI:37565"/>
    </ligand>
</feature>
<feature type="binding site" evidence="9 17">
    <location>
        <position position="39"/>
    </location>
    <ligand>
        <name>GDP</name>
        <dbReference type="ChEBI" id="CHEBI:58189"/>
    </ligand>
</feature>
<feature type="binding site" evidence="9 19">
    <location>
        <position position="39"/>
    </location>
    <ligand>
        <name>GTP</name>
        <dbReference type="ChEBI" id="CHEBI:37565"/>
    </ligand>
</feature>
<feature type="binding site" evidence="9 17 18">
    <location>
        <position position="40"/>
    </location>
    <ligand>
        <name>GDP</name>
        <dbReference type="ChEBI" id="CHEBI:58189"/>
    </ligand>
</feature>
<feature type="binding site" evidence="9 19">
    <location>
        <position position="40"/>
    </location>
    <ligand>
        <name>GTP</name>
        <dbReference type="ChEBI" id="CHEBI:37565"/>
    </ligand>
</feature>
<feature type="binding site" evidence="9 17">
    <location>
        <position position="58"/>
    </location>
    <ligand>
        <name>GDP</name>
        <dbReference type="ChEBI" id="CHEBI:58189"/>
    </ligand>
</feature>
<feature type="binding site" evidence="9 19">
    <location>
        <position position="75"/>
    </location>
    <ligand>
        <name>Mg(2+)</name>
        <dbReference type="ChEBI" id="CHEBI:18420"/>
    </ligand>
</feature>
<feature type="binding site" evidence="9 17 18">
    <location>
        <position position="134"/>
    </location>
    <ligand>
        <name>GDP</name>
        <dbReference type="ChEBI" id="CHEBI:58189"/>
    </ligand>
</feature>
<feature type="binding site" evidence="9 19">
    <location>
        <position position="134"/>
    </location>
    <ligand>
        <name>GTP</name>
        <dbReference type="ChEBI" id="CHEBI:37565"/>
    </ligand>
</feature>
<feature type="binding site" evidence="9 17 18">
    <location>
        <position position="135"/>
    </location>
    <ligand>
        <name>GDP</name>
        <dbReference type="ChEBI" id="CHEBI:58189"/>
    </ligand>
</feature>
<feature type="binding site" evidence="9 19">
    <location>
        <position position="135"/>
    </location>
    <ligand>
        <name>GTP</name>
        <dbReference type="ChEBI" id="CHEBI:37565"/>
    </ligand>
</feature>
<feature type="binding site" evidence="9 17 18">
    <location>
        <position position="137"/>
    </location>
    <ligand>
        <name>GDP</name>
        <dbReference type="ChEBI" id="CHEBI:58189"/>
    </ligand>
</feature>
<feature type="binding site" evidence="9 19">
    <location>
        <position position="137"/>
    </location>
    <ligand>
        <name>GTP</name>
        <dbReference type="ChEBI" id="CHEBI:37565"/>
    </ligand>
</feature>
<feature type="binding site" evidence="9 17 18">
    <location>
        <position position="180"/>
    </location>
    <ligand>
        <name>GDP</name>
        <dbReference type="ChEBI" id="CHEBI:58189"/>
    </ligand>
</feature>
<feature type="binding site" evidence="9 19">
    <location>
        <position position="180"/>
    </location>
    <ligand>
        <name>GTP</name>
        <dbReference type="ChEBI" id="CHEBI:37565"/>
    </ligand>
</feature>
<feature type="binding site" evidence="9 17 18">
    <location>
        <position position="181"/>
    </location>
    <ligand>
        <name>GDP</name>
        <dbReference type="ChEBI" id="CHEBI:58189"/>
    </ligand>
</feature>
<feature type="binding site" evidence="9 19">
    <location>
        <position position="181"/>
    </location>
    <ligand>
        <name>GTP</name>
        <dbReference type="ChEBI" id="CHEBI:37565"/>
    </ligand>
</feature>
<feature type="modified residue" description="Phosphoserine" evidence="21">
    <location>
        <position position="164"/>
    </location>
</feature>
<feature type="sequence variant" id="VAR_059051" description="In CMRD." evidence="4">
    <original>G</original>
    <variation>D</variation>
    <location>
        <position position="11"/>
    </location>
</feature>
<feature type="sequence variant" id="VAR_016806" description="In CMRD; loss of GDP/GTP-binding; dbSNP:rs121917846." evidence="2">
    <original>G</original>
    <variation>R</variation>
    <location>
        <position position="37"/>
    </location>
</feature>
<feature type="sequence variant" id="VAR_059052" description="In CMRD; dbSNP:rs1254114609." evidence="4">
    <original>D</original>
    <variation>G</variation>
    <location>
        <position position="75"/>
    </location>
</feature>
<feature type="sequence variant" id="VAR_016807" description="In CMRD; reduced affinity for GDP/GTP; dbSNP:rs28942109." evidence="2">
    <original>D</original>
    <variation>N</variation>
    <location>
        <position position="137"/>
    </location>
</feature>
<feature type="sequence variant" id="VAR_016808" description="In CMRD; loss of GDP/GTP-binding; dbSNP:rs28942110." evidence="2">
    <original>S</original>
    <variation>R</variation>
    <location>
        <position position="179"/>
    </location>
</feature>
<feature type="mutagenesis site" description="Loss of interaction with MIOS. Loss of localization to lysosomal membrane. Loss of function in negative regulation of TORC1 signaling." evidence="8">
    <original>H</original>
    <variation>A</variation>
    <location>
        <position position="58"/>
    </location>
</feature>
<feature type="mutagenesis site" description="Loss of GTPase activity. Constitutively restricted in GTP active state." evidence="9">
    <original>H</original>
    <variation>G</variation>
    <location>
        <position position="79"/>
    </location>
</feature>
<feature type="mutagenesis site" description="Loss of leucine binding. Constitutive negative regulation of TORC1 signaling." evidence="8">
    <original>V</original>
    <variation>A</variation>
    <location>
        <position position="100"/>
    </location>
</feature>
<feature type="mutagenesis site" description="Loss of interaction with MIOS. Loss of localization to lysosomal membrane. Loss of function in negative regulation of TORC1 signaling." evidence="8">
    <original>E</original>
    <variation>A</variation>
    <location>
        <position position="114"/>
    </location>
</feature>
<feature type="mutagenesis site" description="Loss of interaction with MIOS. Loss of localization to lysosomal membrane. Loss of function in negative regulation of TORC1 signaling." evidence="8">
    <original>E</original>
    <variation>A</variation>
    <location>
        <position position="122"/>
    </location>
</feature>
<feature type="mutagenesis site" description="Loss of leucine binding. Constitutive negative regulation of TORC1 signaling." evidence="8">
    <original>A</original>
    <variation>D</variation>
    <location>
        <position position="141"/>
    </location>
</feature>
<feature type="mutagenesis site" description="Loss of leucine binding. Constitutive negative regulation of TORC1 signaling." evidence="8">
    <original>E</original>
    <variation>A</variation>
    <location>
        <position position="144"/>
    </location>
</feature>
<feature type="helix" evidence="22">
    <location>
        <begin position="14"/>
        <end position="18"/>
    </location>
</feature>
<feature type="strand" evidence="22">
    <location>
        <begin position="26"/>
        <end position="33"/>
    </location>
</feature>
<feature type="helix" evidence="22">
    <location>
        <begin position="38"/>
        <end position="45"/>
    </location>
</feature>
<feature type="turn" evidence="23">
    <location>
        <begin position="48"/>
        <end position="51"/>
    </location>
</feature>
<feature type="strand" evidence="23">
    <location>
        <begin position="56"/>
        <end position="58"/>
    </location>
</feature>
<feature type="strand" evidence="22">
    <location>
        <begin position="61"/>
        <end position="66"/>
    </location>
</feature>
<feature type="strand" evidence="22">
    <location>
        <begin position="69"/>
        <end position="76"/>
    </location>
</feature>
<feature type="strand" evidence="23">
    <location>
        <begin position="78"/>
        <end position="80"/>
    </location>
</feature>
<feature type="helix" evidence="22">
    <location>
        <begin position="85"/>
        <end position="92"/>
    </location>
</feature>
<feature type="strand" evidence="22">
    <location>
        <begin position="94"/>
        <end position="101"/>
    </location>
</feature>
<feature type="helix" evidence="22">
    <location>
        <begin position="105"/>
        <end position="107"/>
    </location>
</feature>
<feature type="helix" evidence="22">
    <location>
        <begin position="108"/>
        <end position="119"/>
    </location>
</feature>
<feature type="helix" evidence="22">
    <location>
        <begin position="122"/>
        <end position="124"/>
    </location>
</feature>
<feature type="strand" evidence="22">
    <location>
        <begin position="129"/>
        <end position="134"/>
    </location>
</feature>
<feature type="helix" evidence="22">
    <location>
        <begin position="144"/>
        <end position="151"/>
    </location>
</feature>
<feature type="turn" evidence="22">
    <location>
        <begin position="154"/>
        <end position="156"/>
    </location>
</feature>
<feature type="strand" evidence="24">
    <location>
        <begin position="160"/>
        <end position="162"/>
    </location>
</feature>
<feature type="turn" evidence="22">
    <location>
        <begin position="165"/>
        <end position="167"/>
    </location>
</feature>
<feature type="strand" evidence="22">
    <location>
        <begin position="173"/>
        <end position="177"/>
    </location>
</feature>
<feature type="turn" evidence="22">
    <location>
        <begin position="180"/>
        <end position="183"/>
    </location>
</feature>
<feature type="helix" evidence="22">
    <location>
        <begin position="186"/>
        <end position="194"/>
    </location>
</feature>